<keyword id="KW-0413">Isomerase</keyword>
<keyword id="KW-0460">Magnesium</keyword>
<keyword id="KW-0479">Metal-binding</keyword>
<keyword id="KW-0597">Phosphoprotein</keyword>
<keyword id="KW-1185">Reference proteome</keyword>
<sequence length="444" mass="47655">MSRKYFGTDGIRGEVGTSPITPDFVLRLGHAVGRVLRGTHDRPVVLIGKDTRISGYMLESALEAGLNSAGVDVMLTGPLPTPAVAYLTRALRLSLGVVISASHNHFMDNGIKFFSARGEKLSDAWEMEVEAAIEAPPQWSDSSQIGRARRLHDAPGRYVEFCKSTFSNELSLKGLKIVVDAANGAAYHVAPDVFHELGADVVRIGCEPDGLNINDGVGATSPQALVEAVRMNGADYGVALDGDADRVLLVDRNGRLYNGDELLYVMVADRLAQGEPVPGAVGTLMTNMAVEVALQQRGVEFVRAKVGDRYVLEELVSRGWQLGGEGSGHLLALDKHTTGDGIVSALQVLQAQQRNGRSIAELLDGVELFPQTLINVRLAAGQDWKLNDRLARERIAIGNELGQSGRVLIRPSGTEPLLRVMVEARDAAQARLCADRLAVAAQEG</sequence>
<comment type="function">
    <text evidence="1">Catalyzes the conversion of glucosamine-6-phosphate to glucosamine-1-phosphate.</text>
</comment>
<comment type="catalytic activity">
    <reaction evidence="1">
        <text>alpha-D-glucosamine 1-phosphate = D-glucosamine 6-phosphate</text>
        <dbReference type="Rhea" id="RHEA:23424"/>
        <dbReference type="ChEBI" id="CHEBI:58516"/>
        <dbReference type="ChEBI" id="CHEBI:58725"/>
        <dbReference type="EC" id="5.4.2.10"/>
    </reaction>
</comment>
<comment type="cofactor">
    <cofactor evidence="1">
        <name>Mg(2+)</name>
        <dbReference type="ChEBI" id="CHEBI:18420"/>
    </cofactor>
    <text evidence="1">Binds 1 Mg(2+) ion per subunit.</text>
</comment>
<comment type="PTM">
    <text evidence="1">Activated by phosphorylation.</text>
</comment>
<comment type="similarity">
    <text evidence="1">Belongs to the phosphohexose mutase family.</text>
</comment>
<protein>
    <recommendedName>
        <fullName evidence="1">Phosphoglucosamine mutase</fullName>
        <ecNumber evidence="1">5.4.2.10</ecNumber>
    </recommendedName>
</protein>
<organism>
    <name type="scientific">Leptothrix cholodnii (strain ATCC 51168 / LMG 8142 / SP-6)</name>
    <name type="common">Leptothrix discophora (strain SP-6)</name>
    <dbReference type="NCBI Taxonomy" id="395495"/>
    <lineage>
        <taxon>Bacteria</taxon>
        <taxon>Pseudomonadati</taxon>
        <taxon>Pseudomonadota</taxon>
        <taxon>Betaproteobacteria</taxon>
        <taxon>Burkholderiales</taxon>
        <taxon>Sphaerotilaceae</taxon>
        <taxon>Leptothrix</taxon>
    </lineage>
</organism>
<name>GLMM_LEPCP</name>
<reference key="1">
    <citation type="submission" date="2008-03" db="EMBL/GenBank/DDBJ databases">
        <title>Complete sequence of Leptothrix cholodnii SP-6.</title>
        <authorList>
            <consortium name="US DOE Joint Genome Institute"/>
            <person name="Copeland A."/>
            <person name="Lucas S."/>
            <person name="Lapidus A."/>
            <person name="Glavina del Rio T."/>
            <person name="Dalin E."/>
            <person name="Tice H."/>
            <person name="Bruce D."/>
            <person name="Goodwin L."/>
            <person name="Pitluck S."/>
            <person name="Chertkov O."/>
            <person name="Brettin T."/>
            <person name="Detter J.C."/>
            <person name="Han C."/>
            <person name="Kuske C.R."/>
            <person name="Schmutz J."/>
            <person name="Larimer F."/>
            <person name="Land M."/>
            <person name="Hauser L."/>
            <person name="Kyrpides N."/>
            <person name="Lykidis A."/>
            <person name="Emerson D."/>
            <person name="Richardson P."/>
        </authorList>
    </citation>
    <scope>NUCLEOTIDE SEQUENCE [LARGE SCALE GENOMIC DNA]</scope>
    <source>
        <strain>ATCC 51168 / LMG 8142 / SP-6</strain>
    </source>
</reference>
<accession>B1XXG0</accession>
<feature type="chain" id="PRO_1000201115" description="Phosphoglucosamine mutase">
    <location>
        <begin position="1"/>
        <end position="444"/>
    </location>
</feature>
<feature type="active site" description="Phosphoserine intermediate" evidence="1">
    <location>
        <position position="102"/>
    </location>
</feature>
<feature type="binding site" description="via phosphate group" evidence="1">
    <location>
        <position position="102"/>
    </location>
    <ligand>
        <name>Mg(2+)</name>
        <dbReference type="ChEBI" id="CHEBI:18420"/>
    </ligand>
</feature>
<feature type="binding site" evidence="1">
    <location>
        <position position="241"/>
    </location>
    <ligand>
        <name>Mg(2+)</name>
        <dbReference type="ChEBI" id="CHEBI:18420"/>
    </ligand>
</feature>
<feature type="binding site" evidence="1">
    <location>
        <position position="243"/>
    </location>
    <ligand>
        <name>Mg(2+)</name>
        <dbReference type="ChEBI" id="CHEBI:18420"/>
    </ligand>
</feature>
<feature type="binding site" evidence="1">
    <location>
        <position position="245"/>
    </location>
    <ligand>
        <name>Mg(2+)</name>
        <dbReference type="ChEBI" id="CHEBI:18420"/>
    </ligand>
</feature>
<feature type="modified residue" description="Phosphoserine" evidence="1">
    <location>
        <position position="102"/>
    </location>
</feature>
<gene>
    <name evidence="1" type="primary">glmM</name>
    <name type="ordered locus">Lcho_2815</name>
</gene>
<proteinExistence type="inferred from homology"/>
<evidence type="ECO:0000255" key="1">
    <source>
        <dbReference type="HAMAP-Rule" id="MF_01554"/>
    </source>
</evidence>
<dbReference type="EC" id="5.4.2.10" evidence="1"/>
<dbReference type="EMBL" id="CP001013">
    <property type="protein sequence ID" value="ACB35080.1"/>
    <property type="molecule type" value="Genomic_DNA"/>
</dbReference>
<dbReference type="RefSeq" id="WP_012347834.1">
    <property type="nucleotide sequence ID" value="NC_010524.1"/>
</dbReference>
<dbReference type="SMR" id="B1XXG0"/>
<dbReference type="STRING" id="395495.Lcho_2815"/>
<dbReference type="KEGG" id="lch:Lcho_2815"/>
<dbReference type="eggNOG" id="COG1109">
    <property type="taxonomic scope" value="Bacteria"/>
</dbReference>
<dbReference type="HOGENOM" id="CLU_016950_7_0_4"/>
<dbReference type="OrthoDB" id="9803322at2"/>
<dbReference type="Proteomes" id="UP000001693">
    <property type="component" value="Chromosome"/>
</dbReference>
<dbReference type="GO" id="GO:0005829">
    <property type="term" value="C:cytosol"/>
    <property type="evidence" value="ECO:0007669"/>
    <property type="project" value="TreeGrafter"/>
</dbReference>
<dbReference type="GO" id="GO:0000287">
    <property type="term" value="F:magnesium ion binding"/>
    <property type="evidence" value="ECO:0007669"/>
    <property type="project" value="UniProtKB-UniRule"/>
</dbReference>
<dbReference type="GO" id="GO:0008966">
    <property type="term" value="F:phosphoglucosamine mutase activity"/>
    <property type="evidence" value="ECO:0007669"/>
    <property type="project" value="UniProtKB-UniRule"/>
</dbReference>
<dbReference type="GO" id="GO:0004615">
    <property type="term" value="F:phosphomannomutase activity"/>
    <property type="evidence" value="ECO:0007669"/>
    <property type="project" value="TreeGrafter"/>
</dbReference>
<dbReference type="GO" id="GO:0005975">
    <property type="term" value="P:carbohydrate metabolic process"/>
    <property type="evidence" value="ECO:0007669"/>
    <property type="project" value="InterPro"/>
</dbReference>
<dbReference type="GO" id="GO:0009252">
    <property type="term" value="P:peptidoglycan biosynthetic process"/>
    <property type="evidence" value="ECO:0007669"/>
    <property type="project" value="TreeGrafter"/>
</dbReference>
<dbReference type="GO" id="GO:0006048">
    <property type="term" value="P:UDP-N-acetylglucosamine biosynthetic process"/>
    <property type="evidence" value="ECO:0007669"/>
    <property type="project" value="TreeGrafter"/>
</dbReference>
<dbReference type="CDD" id="cd05802">
    <property type="entry name" value="GlmM"/>
    <property type="match status" value="1"/>
</dbReference>
<dbReference type="FunFam" id="3.40.120.10:FF:000001">
    <property type="entry name" value="Phosphoglucosamine mutase"/>
    <property type="match status" value="1"/>
</dbReference>
<dbReference type="FunFam" id="3.40.120.10:FF:000003">
    <property type="entry name" value="Phosphoglucosamine mutase"/>
    <property type="match status" value="1"/>
</dbReference>
<dbReference type="Gene3D" id="3.40.120.10">
    <property type="entry name" value="Alpha-D-Glucose-1,6-Bisphosphate, subunit A, domain 3"/>
    <property type="match status" value="3"/>
</dbReference>
<dbReference type="Gene3D" id="3.30.310.50">
    <property type="entry name" value="Alpha-D-phosphohexomutase, C-terminal domain"/>
    <property type="match status" value="1"/>
</dbReference>
<dbReference type="HAMAP" id="MF_01554_B">
    <property type="entry name" value="GlmM_B"/>
    <property type="match status" value="1"/>
</dbReference>
<dbReference type="InterPro" id="IPR005844">
    <property type="entry name" value="A-D-PHexomutase_a/b/a-I"/>
</dbReference>
<dbReference type="InterPro" id="IPR016055">
    <property type="entry name" value="A-D-PHexomutase_a/b/a-I/II/III"/>
</dbReference>
<dbReference type="InterPro" id="IPR005845">
    <property type="entry name" value="A-D-PHexomutase_a/b/a-II"/>
</dbReference>
<dbReference type="InterPro" id="IPR005846">
    <property type="entry name" value="A-D-PHexomutase_a/b/a-III"/>
</dbReference>
<dbReference type="InterPro" id="IPR005843">
    <property type="entry name" value="A-D-PHexomutase_C"/>
</dbReference>
<dbReference type="InterPro" id="IPR036900">
    <property type="entry name" value="A-D-PHexomutase_C_sf"/>
</dbReference>
<dbReference type="InterPro" id="IPR005841">
    <property type="entry name" value="Alpha-D-phosphohexomutase_SF"/>
</dbReference>
<dbReference type="InterPro" id="IPR006352">
    <property type="entry name" value="GlmM_bact"/>
</dbReference>
<dbReference type="InterPro" id="IPR050060">
    <property type="entry name" value="Phosphoglucosamine_mutase"/>
</dbReference>
<dbReference type="NCBIfam" id="TIGR01455">
    <property type="entry name" value="glmM"/>
    <property type="match status" value="1"/>
</dbReference>
<dbReference type="NCBIfam" id="NF008139">
    <property type="entry name" value="PRK10887.1"/>
    <property type="match status" value="1"/>
</dbReference>
<dbReference type="PANTHER" id="PTHR42946:SF1">
    <property type="entry name" value="PHOSPHOGLUCOMUTASE (ALPHA-D-GLUCOSE-1,6-BISPHOSPHATE-DEPENDENT)"/>
    <property type="match status" value="1"/>
</dbReference>
<dbReference type="PANTHER" id="PTHR42946">
    <property type="entry name" value="PHOSPHOHEXOSE MUTASE"/>
    <property type="match status" value="1"/>
</dbReference>
<dbReference type="Pfam" id="PF02878">
    <property type="entry name" value="PGM_PMM_I"/>
    <property type="match status" value="1"/>
</dbReference>
<dbReference type="Pfam" id="PF02879">
    <property type="entry name" value="PGM_PMM_II"/>
    <property type="match status" value="1"/>
</dbReference>
<dbReference type="Pfam" id="PF02880">
    <property type="entry name" value="PGM_PMM_III"/>
    <property type="match status" value="1"/>
</dbReference>
<dbReference type="Pfam" id="PF00408">
    <property type="entry name" value="PGM_PMM_IV"/>
    <property type="match status" value="1"/>
</dbReference>
<dbReference type="PRINTS" id="PR00509">
    <property type="entry name" value="PGMPMM"/>
</dbReference>
<dbReference type="SUPFAM" id="SSF55957">
    <property type="entry name" value="Phosphoglucomutase, C-terminal domain"/>
    <property type="match status" value="1"/>
</dbReference>
<dbReference type="SUPFAM" id="SSF53738">
    <property type="entry name" value="Phosphoglucomutase, first 3 domains"/>
    <property type="match status" value="3"/>
</dbReference>